<gene>
    <name evidence="1" type="primary">purM</name>
    <name type="ordered locus">SAUSA300_0973</name>
</gene>
<reference key="1">
    <citation type="journal article" date="2006" name="Lancet">
        <title>Complete genome sequence of USA300, an epidemic clone of community-acquired meticillin-resistant Staphylococcus aureus.</title>
        <authorList>
            <person name="Diep B.A."/>
            <person name="Gill S.R."/>
            <person name="Chang R.F."/>
            <person name="Phan T.H."/>
            <person name="Chen J.H."/>
            <person name="Davidson M.G."/>
            <person name="Lin F."/>
            <person name="Lin J."/>
            <person name="Carleton H.A."/>
            <person name="Mongodin E.F."/>
            <person name="Sensabaugh G.F."/>
            <person name="Perdreau-Remington F."/>
        </authorList>
    </citation>
    <scope>NUCLEOTIDE SEQUENCE [LARGE SCALE GENOMIC DNA]</scope>
    <source>
        <strain>USA300</strain>
    </source>
</reference>
<feature type="chain" id="PRO_0000258411" description="Phosphoribosylformylglycinamidine cyclo-ligase">
    <location>
        <begin position="1"/>
        <end position="342"/>
    </location>
</feature>
<dbReference type="EC" id="6.3.3.1" evidence="1"/>
<dbReference type="EMBL" id="CP000255">
    <property type="protein sequence ID" value="ABD20389.1"/>
    <property type="molecule type" value="Genomic_DNA"/>
</dbReference>
<dbReference type="RefSeq" id="WP_000030812.1">
    <property type="nucleotide sequence ID" value="NZ_CP027476.1"/>
</dbReference>
<dbReference type="SMR" id="Q2FI07"/>
<dbReference type="KEGG" id="saa:SAUSA300_0973"/>
<dbReference type="HOGENOM" id="CLU_047116_0_0_9"/>
<dbReference type="OMA" id="MTDYICV"/>
<dbReference type="UniPathway" id="UPA00074">
    <property type="reaction ID" value="UER00129"/>
</dbReference>
<dbReference type="Proteomes" id="UP000001939">
    <property type="component" value="Chromosome"/>
</dbReference>
<dbReference type="GO" id="GO:0005829">
    <property type="term" value="C:cytosol"/>
    <property type="evidence" value="ECO:0007669"/>
    <property type="project" value="TreeGrafter"/>
</dbReference>
<dbReference type="GO" id="GO:0005524">
    <property type="term" value="F:ATP binding"/>
    <property type="evidence" value="ECO:0007669"/>
    <property type="project" value="UniProtKB-KW"/>
</dbReference>
<dbReference type="GO" id="GO:0004637">
    <property type="term" value="F:phosphoribosylamine-glycine ligase activity"/>
    <property type="evidence" value="ECO:0007669"/>
    <property type="project" value="TreeGrafter"/>
</dbReference>
<dbReference type="GO" id="GO:0004641">
    <property type="term" value="F:phosphoribosylformylglycinamidine cyclo-ligase activity"/>
    <property type="evidence" value="ECO:0007669"/>
    <property type="project" value="UniProtKB-UniRule"/>
</dbReference>
<dbReference type="GO" id="GO:0006189">
    <property type="term" value="P:'de novo' IMP biosynthetic process"/>
    <property type="evidence" value="ECO:0007669"/>
    <property type="project" value="UniProtKB-UniRule"/>
</dbReference>
<dbReference type="GO" id="GO:0046084">
    <property type="term" value="P:adenine biosynthetic process"/>
    <property type="evidence" value="ECO:0007669"/>
    <property type="project" value="TreeGrafter"/>
</dbReference>
<dbReference type="CDD" id="cd02196">
    <property type="entry name" value="PurM"/>
    <property type="match status" value="1"/>
</dbReference>
<dbReference type="FunFam" id="3.30.1330.10:FF:000001">
    <property type="entry name" value="Phosphoribosylformylglycinamidine cyclo-ligase"/>
    <property type="match status" value="1"/>
</dbReference>
<dbReference type="FunFam" id="3.90.650.10:FF:000001">
    <property type="entry name" value="Phosphoribosylformylglycinamidine cyclo-ligase"/>
    <property type="match status" value="1"/>
</dbReference>
<dbReference type="Gene3D" id="3.90.650.10">
    <property type="entry name" value="PurM-like C-terminal domain"/>
    <property type="match status" value="1"/>
</dbReference>
<dbReference type="Gene3D" id="3.30.1330.10">
    <property type="entry name" value="PurM-like, N-terminal domain"/>
    <property type="match status" value="1"/>
</dbReference>
<dbReference type="HAMAP" id="MF_00741">
    <property type="entry name" value="AIRS"/>
    <property type="match status" value="1"/>
</dbReference>
<dbReference type="InterPro" id="IPR010918">
    <property type="entry name" value="PurM-like_C_dom"/>
</dbReference>
<dbReference type="InterPro" id="IPR036676">
    <property type="entry name" value="PurM-like_C_sf"/>
</dbReference>
<dbReference type="InterPro" id="IPR016188">
    <property type="entry name" value="PurM-like_N"/>
</dbReference>
<dbReference type="InterPro" id="IPR036921">
    <property type="entry name" value="PurM-like_N_sf"/>
</dbReference>
<dbReference type="InterPro" id="IPR004733">
    <property type="entry name" value="PurM_cligase"/>
</dbReference>
<dbReference type="NCBIfam" id="TIGR00878">
    <property type="entry name" value="purM"/>
    <property type="match status" value="1"/>
</dbReference>
<dbReference type="PANTHER" id="PTHR10520:SF12">
    <property type="entry name" value="TRIFUNCTIONAL PURINE BIOSYNTHETIC PROTEIN ADENOSINE-3"/>
    <property type="match status" value="1"/>
</dbReference>
<dbReference type="PANTHER" id="PTHR10520">
    <property type="entry name" value="TRIFUNCTIONAL PURINE BIOSYNTHETIC PROTEIN ADENOSINE-3-RELATED"/>
    <property type="match status" value="1"/>
</dbReference>
<dbReference type="Pfam" id="PF00586">
    <property type="entry name" value="AIRS"/>
    <property type="match status" value="1"/>
</dbReference>
<dbReference type="Pfam" id="PF02769">
    <property type="entry name" value="AIRS_C"/>
    <property type="match status" value="1"/>
</dbReference>
<dbReference type="SUPFAM" id="SSF56042">
    <property type="entry name" value="PurM C-terminal domain-like"/>
    <property type="match status" value="1"/>
</dbReference>
<dbReference type="SUPFAM" id="SSF55326">
    <property type="entry name" value="PurM N-terminal domain-like"/>
    <property type="match status" value="1"/>
</dbReference>
<name>PUR5_STAA3</name>
<comment type="catalytic activity">
    <reaction evidence="1">
        <text>2-formamido-N(1)-(5-O-phospho-beta-D-ribosyl)acetamidine + ATP = 5-amino-1-(5-phospho-beta-D-ribosyl)imidazole + ADP + phosphate + H(+)</text>
        <dbReference type="Rhea" id="RHEA:23032"/>
        <dbReference type="ChEBI" id="CHEBI:15378"/>
        <dbReference type="ChEBI" id="CHEBI:30616"/>
        <dbReference type="ChEBI" id="CHEBI:43474"/>
        <dbReference type="ChEBI" id="CHEBI:137981"/>
        <dbReference type="ChEBI" id="CHEBI:147287"/>
        <dbReference type="ChEBI" id="CHEBI:456216"/>
        <dbReference type="EC" id="6.3.3.1"/>
    </reaction>
</comment>
<comment type="pathway">
    <text evidence="1">Purine metabolism; IMP biosynthesis via de novo pathway; 5-amino-1-(5-phospho-D-ribosyl)imidazole from N(2)-formyl-N(1)-(5-phospho-D-ribosyl)glycinamide: step 2/2.</text>
</comment>
<comment type="subcellular location">
    <subcellularLocation>
        <location evidence="1">Cytoplasm</location>
    </subcellularLocation>
</comment>
<comment type="similarity">
    <text evidence="1">Belongs to the AIR synthase family.</text>
</comment>
<keyword id="KW-0067">ATP-binding</keyword>
<keyword id="KW-0963">Cytoplasm</keyword>
<keyword id="KW-0436">Ligase</keyword>
<keyword id="KW-0547">Nucleotide-binding</keyword>
<keyword id="KW-0658">Purine biosynthesis</keyword>
<accession>Q2FI07</accession>
<organism>
    <name type="scientific">Staphylococcus aureus (strain USA300)</name>
    <dbReference type="NCBI Taxonomy" id="367830"/>
    <lineage>
        <taxon>Bacteria</taxon>
        <taxon>Bacillati</taxon>
        <taxon>Bacillota</taxon>
        <taxon>Bacilli</taxon>
        <taxon>Bacillales</taxon>
        <taxon>Staphylococcaceae</taxon>
        <taxon>Staphylococcus</taxon>
    </lineage>
</organism>
<sequence length="342" mass="37017">MSKAYEQSGVNIHAGYEAVERMSSHVKRTMRKEVIGGLGGFGATFDLSQLNMTAPVLVSGTDGVGTKLKLAIDYGKHDSIGIDAVAMCVNDILTTGAEPLYFLDYIATNKVVPEVIEQIVKGISDACVETNTALIGGETAEMGEMYHEGEYDVAGFAVGAVEKDDYVDGSEVKEGQVVIGLASSGIHSNGYSLVRKLINESGIDLASNFDNRPFIDVFLEPTKLYVKPVLALKKEVSIKAMNHITGGGFYENIPRALPAGYAARIDTTSFPTPKIFDWLQQQGNIDTNEMYNIFNMGIGYTVIVDEKDVSRALKILAEQNVEAYQIGHIVKNESTAIELLGV</sequence>
<protein>
    <recommendedName>
        <fullName evidence="1">Phosphoribosylformylglycinamidine cyclo-ligase</fullName>
        <ecNumber evidence="1">6.3.3.1</ecNumber>
    </recommendedName>
    <alternativeName>
        <fullName evidence="1">AIR synthase</fullName>
    </alternativeName>
    <alternativeName>
        <fullName evidence="1">AIRS</fullName>
    </alternativeName>
    <alternativeName>
        <fullName evidence="1">Phosphoribosyl-aminoimidazole synthetase</fullName>
    </alternativeName>
</protein>
<proteinExistence type="inferred from homology"/>
<evidence type="ECO:0000255" key="1">
    <source>
        <dbReference type="HAMAP-Rule" id="MF_00741"/>
    </source>
</evidence>